<evidence type="ECO:0000250" key="1">
    <source>
        <dbReference type="UniProtKB" id="Q2FXT0"/>
    </source>
</evidence>
<evidence type="ECO:0000255" key="2">
    <source>
        <dbReference type="HAMAP-Rule" id="MF_00539"/>
    </source>
</evidence>
<evidence type="ECO:0000256" key="3">
    <source>
        <dbReference type="SAM" id="MobiDB-lite"/>
    </source>
</evidence>
<evidence type="ECO:0000305" key="4"/>
<feature type="propeptide" id="PRO_0000459854" evidence="1">
    <location>
        <begin position="1"/>
        <end position="9"/>
    </location>
</feature>
<feature type="chain" id="PRO_0000181036" description="Large ribosomal subunit protein bL27">
    <location>
        <begin position="10"/>
        <end position="96"/>
    </location>
</feature>
<feature type="region of interest" description="Disordered" evidence="3">
    <location>
        <begin position="13"/>
        <end position="35"/>
    </location>
</feature>
<sequence length="96" mass="10505">MLRLDLQFFASKKGVGSTKNGRDSQSKRLGAKRADGQTVTGGSILYRQRGTKIYPGVNVGRGGDDTLYAKVDGVVRFERLGRDRKQVSVYPVAQEA</sequence>
<proteinExistence type="inferred from homology"/>
<keyword id="KW-1185">Reference proteome</keyword>
<keyword id="KW-0687">Ribonucleoprotein</keyword>
<keyword id="KW-0689">Ribosomal protein</keyword>
<name>RL27_BACCR</name>
<accession>Q817U4</accession>
<comment type="PTM">
    <text evidence="1">The N-terminus is cleaved by ribosomal processing cysteine protease Prp.</text>
</comment>
<comment type="similarity">
    <text evidence="2">Belongs to the bacterial ribosomal protein bL27 family.</text>
</comment>
<dbReference type="EMBL" id="AE016877">
    <property type="protein sequence ID" value="AAP11349.1"/>
    <property type="molecule type" value="Genomic_DNA"/>
</dbReference>
<dbReference type="RefSeq" id="NP_834148.1">
    <property type="nucleotide sequence ID" value="NC_004722.1"/>
</dbReference>
<dbReference type="RefSeq" id="WP_000944958.1">
    <property type="nucleotide sequence ID" value="NZ_CP138336.1"/>
</dbReference>
<dbReference type="SMR" id="Q817U4"/>
<dbReference type="STRING" id="226900.BC_4436"/>
<dbReference type="GeneID" id="93006658"/>
<dbReference type="KEGG" id="bce:BC4436"/>
<dbReference type="PATRIC" id="fig|226900.8.peg.4587"/>
<dbReference type="HOGENOM" id="CLU_095424_4_0_9"/>
<dbReference type="Proteomes" id="UP000001417">
    <property type="component" value="Chromosome"/>
</dbReference>
<dbReference type="GO" id="GO:0022625">
    <property type="term" value="C:cytosolic large ribosomal subunit"/>
    <property type="evidence" value="ECO:0000318"/>
    <property type="project" value="GO_Central"/>
</dbReference>
<dbReference type="GO" id="GO:0003735">
    <property type="term" value="F:structural constituent of ribosome"/>
    <property type="evidence" value="ECO:0000318"/>
    <property type="project" value="GO_Central"/>
</dbReference>
<dbReference type="GO" id="GO:0006412">
    <property type="term" value="P:translation"/>
    <property type="evidence" value="ECO:0007669"/>
    <property type="project" value="UniProtKB-UniRule"/>
</dbReference>
<dbReference type="FunFam" id="2.40.50.100:FF:000004">
    <property type="entry name" value="50S ribosomal protein L27"/>
    <property type="match status" value="1"/>
</dbReference>
<dbReference type="Gene3D" id="2.40.50.100">
    <property type="match status" value="1"/>
</dbReference>
<dbReference type="HAMAP" id="MF_00539">
    <property type="entry name" value="Ribosomal_bL27"/>
    <property type="match status" value="1"/>
</dbReference>
<dbReference type="InterPro" id="IPR001684">
    <property type="entry name" value="Ribosomal_bL27"/>
</dbReference>
<dbReference type="InterPro" id="IPR018261">
    <property type="entry name" value="Ribosomal_bL27_CS"/>
</dbReference>
<dbReference type="NCBIfam" id="TIGR00062">
    <property type="entry name" value="L27"/>
    <property type="match status" value="1"/>
</dbReference>
<dbReference type="PANTHER" id="PTHR15893:SF0">
    <property type="entry name" value="LARGE RIBOSOMAL SUBUNIT PROTEIN BL27M"/>
    <property type="match status" value="1"/>
</dbReference>
<dbReference type="PANTHER" id="PTHR15893">
    <property type="entry name" value="RIBOSOMAL PROTEIN L27"/>
    <property type="match status" value="1"/>
</dbReference>
<dbReference type="Pfam" id="PF01016">
    <property type="entry name" value="Ribosomal_L27"/>
    <property type="match status" value="1"/>
</dbReference>
<dbReference type="PRINTS" id="PR00063">
    <property type="entry name" value="RIBOSOMALL27"/>
</dbReference>
<dbReference type="SUPFAM" id="SSF110324">
    <property type="entry name" value="Ribosomal L27 protein-like"/>
    <property type="match status" value="1"/>
</dbReference>
<dbReference type="PROSITE" id="PS00831">
    <property type="entry name" value="RIBOSOMAL_L27"/>
    <property type="match status" value="1"/>
</dbReference>
<gene>
    <name evidence="2" type="primary">rpmA</name>
    <name type="ordered locus">BC_4436</name>
</gene>
<protein>
    <recommendedName>
        <fullName evidence="2">Large ribosomal subunit protein bL27</fullName>
    </recommendedName>
    <alternativeName>
        <fullName evidence="4">50S ribosomal protein L27</fullName>
    </alternativeName>
</protein>
<organism>
    <name type="scientific">Bacillus cereus (strain ATCC 14579 / DSM 31 / CCUG 7414 / JCM 2152 / NBRC 15305 / NCIMB 9373 / NCTC 2599 / NRRL B-3711)</name>
    <dbReference type="NCBI Taxonomy" id="226900"/>
    <lineage>
        <taxon>Bacteria</taxon>
        <taxon>Bacillati</taxon>
        <taxon>Bacillota</taxon>
        <taxon>Bacilli</taxon>
        <taxon>Bacillales</taxon>
        <taxon>Bacillaceae</taxon>
        <taxon>Bacillus</taxon>
        <taxon>Bacillus cereus group</taxon>
    </lineage>
</organism>
<reference key="1">
    <citation type="journal article" date="2003" name="Nature">
        <title>Genome sequence of Bacillus cereus and comparative analysis with Bacillus anthracis.</title>
        <authorList>
            <person name="Ivanova N."/>
            <person name="Sorokin A."/>
            <person name="Anderson I."/>
            <person name="Galleron N."/>
            <person name="Candelon B."/>
            <person name="Kapatral V."/>
            <person name="Bhattacharyya A."/>
            <person name="Reznik G."/>
            <person name="Mikhailova N."/>
            <person name="Lapidus A."/>
            <person name="Chu L."/>
            <person name="Mazur M."/>
            <person name="Goltsman E."/>
            <person name="Larsen N."/>
            <person name="D'Souza M."/>
            <person name="Walunas T."/>
            <person name="Grechkin Y."/>
            <person name="Pusch G."/>
            <person name="Haselkorn R."/>
            <person name="Fonstein M."/>
            <person name="Ehrlich S.D."/>
            <person name="Overbeek R."/>
            <person name="Kyrpides N.C."/>
        </authorList>
    </citation>
    <scope>NUCLEOTIDE SEQUENCE [LARGE SCALE GENOMIC DNA]</scope>
    <source>
        <strain>ATCC 14579 / DSM 31 / CCUG 7414 / JCM 2152 / NBRC 15305 / NCIMB 9373 / NCTC 2599 / NRRL B-3711</strain>
    </source>
</reference>